<feature type="chain" id="PRO_0000071272" description="Uncharacterized protein L360">
    <location>
        <begin position="1"/>
        <end position="177"/>
    </location>
</feature>
<organismHost>
    <name type="scientific">Acanthamoeba polyphaga</name>
    <name type="common">Amoeba</name>
    <dbReference type="NCBI Taxonomy" id="5757"/>
</organismHost>
<dbReference type="EMBL" id="AY653733">
    <property type="protein sequence ID" value="AAV50629.1"/>
    <property type="molecule type" value="Genomic_DNA"/>
</dbReference>
<dbReference type="KEGG" id="vg:9924980"/>
<dbReference type="OrthoDB" id="21201at10239"/>
<dbReference type="Proteomes" id="UP000001134">
    <property type="component" value="Genome"/>
</dbReference>
<sequence>MNYIITPVNQNLITAILKDPITGEWNIPILTFNANYDNPFYDDLNVLNNDHKYRQKIIDYFYTCLTEKWLYKDPVFEQLLPYFKISKTKFEGKVCLITNNKKPDMDSNIIYKKFIFKYIETFFVTRIFVEKILKSYVKHTNTKWYDLLNNKTILKGLFAYKIKKIIIGIIENIRNKK</sequence>
<reference key="1">
    <citation type="journal article" date="2004" name="Science">
        <title>The 1.2-megabase genome sequence of Mimivirus.</title>
        <authorList>
            <person name="Raoult D."/>
            <person name="Audic S."/>
            <person name="Robert C."/>
            <person name="Abergel C."/>
            <person name="Renesto P."/>
            <person name="Ogata H."/>
            <person name="La Scola B."/>
            <person name="Susan M."/>
            <person name="Claverie J.-M."/>
        </authorList>
    </citation>
    <scope>NUCLEOTIDE SEQUENCE [LARGE SCALE GENOMIC DNA]</scope>
    <source>
        <strain>Rowbotham-Bradford</strain>
    </source>
</reference>
<organism>
    <name type="scientific">Acanthamoeba polyphaga mimivirus</name>
    <name type="common">APMV</name>
    <dbReference type="NCBI Taxonomy" id="212035"/>
    <lineage>
        <taxon>Viruses</taxon>
        <taxon>Varidnaviria</taxon>
        <taxon>Bamfordvirae</taxon>
        <taxon>Nucleocytoviricota</taxon>
        <taxon>Megaviricetes</taxon>
        <taxon>Imitervirales</taxon>
        <taxon>Mimiviridae</taxon>
        <taxon>Megamimivirinae</taxon>
        <taxon>Mimivirus</taxon>
        <taxon>Mimivirus bradfordmassiliense</taxon>
    </lineage>
</organism>
<gene>
    <name type="ordered locus">MIMI_L360</name>
</gene>
<accession>Q5UQU5</accession>
<name>YL360_MIMIV</name>
<protein>
    <recommendedName>
        <fullName>Uncharacterized protein L360</fullName>
    </recommendedName>
</protein>
<proteinExistence type="predicted"/>
<keyword id="KW-1185">Reference proteome</keyword>